<proteinExistence type="inferred from homology"/>
<keyword id="KW-0150">Chloroplast</keyword>
<keyword id="KW-0934">Plastid</keyword>
<keyword id="KW-1185">Reference proteome</keyword>
<keyword id="KW-0687">Ribonucleoprotein</keyword>
<keyword id="KW-0689">Ribosomal protein</keyword>
<keyword id="KW-0694">RNA-binding</keyword>
<keyword id="KW-0699">rRNA-binding</keyword>
<feature type="chain" id="PRO_0000132650" description="Small ribosomal subunit protein uS4c">
    <location>
        <begin position="1"/>
        <end position="201"/>
    </location>
</feature>
<feature type="domain" description="S4 RNA-binding">
    <location>
        <begin position="89"/>
        <end position="150"/>
    </location>
</feature>
<gene>
    <name type="primary">rps4</name>
</gene>
<geneLocation type="chloroplast"/>
<protein>
    <recommendedName>
        <fullName evidence="2">Small ribosomal subunit protein uS4c</fullName>
    </recommendedName>
    <alternativeName>
        <fullName>30S ribosomal protein S4, chloroplastic</fullName>
    </alternativeName>
</protein>
<organism>
    <name type="scientific">Physcomitrium patens</name>
    <name type="common">Spreading-leaved earth moss</name>
    <name type="synonym">Physcomitrella patens</name>
    <dbReference type="NCBI Taxonomy" id="3218"/>
    <lineage>
        <taxon>Eukaryota</taxon>
        <taxon>Viridiplantae</taxon>
        <taxon>Streptophyta</taxon>
        <taxon>Embryophyta</taxon>
        <taxon>Bryophyta</taxon>
        <taxon>Bryophytina</taxon>
        <taxon>Bryopsida</taxon>
        <taxon>Funariidae</taxon>
        <taxon>Funariales</taxon>
        <taxon>Funariaceae</taxon>
        <taxon>Physcomitrium</taxon>
    </lineage>
</organism>
<sequence>MSRYRGPRVRIIRRLGVLPGLTNKTPQLKSSSANQSTAKKISQYRIRLEEKQKLRFHYGITERQLLNYVRIARKAKGSTGQILLQLLEMRLDNIVFRLGMAPTIPGARQLVNHRHVLVNDCIVDIPSYRCKPEDSITVKNRQKSQAIITKNIDFSQKSKVPNHLTFDSTQKKGLVNQILDRESIGLKINELLVVEYYSRQA</sequence>
<name>RR4_PHYPA</name>
<dbReference type="EMBL" id="AP005672">
    <property type="protein sequence ID" value="BAC85050.1"/>
    <property type="molecule type" value="Genomic_DNA"/>
</dbReference>
<dbReference type="RefSeq" id="NP_904200.1">
    <property type="nucleotide sequence ID" value="NC_005087.2"/>
</dbReference>
<dbReference type="RefSeq" id="YP_009477530.1">
    <property type="nucleotide sequence ID" value="NC_037465.1"/>
</dbReference>
<dbReference type="SMR" id="Q6YXP3"/>
<dbReference type="FunCoup" id="Q6YXP3">
    <property type="interactions" value="365"/>
</dbReference>
<dbReference type="STRING" id="3218.Q6YXP3"/>
<dbReference type="GeneID" id="2546775"/>
<dbReference type="GeneID" id="36487150"/>
<dbReference type="KEGG" id="ppp:2546775"/>
<dbReference type="InParanoid" id="Q6YXP3"/>
<dbReference type="OrthoDB" id="2443at2759"/>
<dbReference type="Proteomes" id="UP000006727">
    <property type="component" value="Chloroplast"/>
</dbReference>
<dbReference type="GO" id="GO:0009507">
    <property type="term" value="C:chloroplast"/>
    <property type="evidence" value="ECO:0007669"/>
    <property type="project" value="UniProtKB-SubCell"/>
</dbReference>
<dbReference type="GO" id="GO:0015935">
    <property type="term" value="C:small ribosomal subunit"/>
    <property type="evidence" value="ECO:0000318"/>
    <property type="project" value="GO_Central"/>
</dbReference>
<dbReference type="GO" id="GO:0019843">
    <property type="term" value="F:rRNA binding"/>
    <property type="evidence" value="ECO:0000318"/>
    <property type="project" value="GO_Central"/>
</dbReference>
<dbReference type="GO" id="GO:0003735">
    <property type="term" value="F:structural constituent of ribosome"/>
    <property type="evidence" value="ECO:0000318"/>
    <property type="project" value="GO_Central"/>
</dbReference>
<dbReference type="GO" id="GO:0042274">
    <property type="term" value="P:ribosomal small subunit biogenesis"/>
    <property type="evidence" value="ECO:0000318"/>
    <property type="project" value="GO_Central"/>
</dbReference>
<dbReference type="GO" id="GO:0006412">
    <property type="term" value="P:translation"/>
    <property type="evidence" value="ECO:0007669"/>
    <property type="project" value="UniProtKB-UniRule"/>
</dbReference>
<dbReference type="CDD" id="cd00165">
    <property type="entry name" value="S4"/>
    <property type="match status" value="1"/>
</dbReference>
<dbReference type="FunFam" id="1.10.1050.10:FF:000002">
    <property type="entry name" value="30S ribosomal protein S4, chloroplastic"/>
    <property type="match status" value="1"/>
</dbReference>
<dbReference type="FunFam" id="3.10.290.10:FF:000081">
    <property type="entry name" value="30S ribosomal protein S4, chloroplastic"/>
    <property type="match status" value="1"/>
</dbReference>
<dbReference type="Gene3D" id="1.10.1050.10">
    <property type="entry name" value="Ribosomal Protein S4 Delta 41, Chain A, domain 1"/>
    <property type="match status" value="1"/>
</dbReference>
<dbReference type="Gene3D" id="3.10.290.10">
    <property type="entry name" value="RNA-binding S4 domain"/>
    <property type="match status" value="1"/>
</dbReference>
<dbReference type="HAMAP" id="MF_01306_B">
    <property type="entry name" value="Ribosomal_uS4_B"/>
    <property type="match status" value="1"/>
</dbReference>
<dbReference type="InterPro" id="IPR022801">
    <property type="entry name" value="Ribosomal_uS4"/>
</dbReference>
<dbReference type="InterPro" id="IPR005709">
    <property type="entry name" value="Ribosomal_uS4_bac-type"/>
</dbReference>
<dbReference type="InterPro" id="IPR018079">
    <property type="entry name" value="Ribosomal_uS4_CS"/>
</dbReference>
<dbReference type="InterPro" id="IPR001912">
    <property type="entry name" value="Ribosomal_uS4_N"/>
</dbReference>
<dbReference type="InterPro" id="IPR002942">
    <property type="entry name" value="S4_RNA-bd"/>
</dbReference>
<dbReference type="InterPro" id="IPR036986">
    <property type="entry name" value="S4_RNA-bd_sf"/>
</dbReference>
<dbReference type="NCBIfam" id="NF003717">
    <property type="entry name" value="PRK05327.1"/>
    <property type="match status" value="1"/>
</dbReference>
<dbReference type="NCBIfam" id="TIGR01017">
    <property type="entry name" value="rpsD_bact"/>
    <property type="match status" value="1"/>
</dbReference>
<dbReference type="PANTHER" id="PTHR11831">
    <property type="entry name" value="30S 40S RIBOSOMAL PROTEIN"/>
    <property type="match status" value="1"/>
</dbReference>
<dbReference type="PANTHER" id="PTHR11831:SF4">
    <property type="entry name" value="SMALL RIBOSOMAL SUBUNIT PROTEIN US4M"/>
    <property type="match status" value="1"/>
</dbReference>
<dbReference type="Pfam" id="PF00163">
    <property type="entry name" value="Ribosomal_S4"/>
    <property type="match status" value="1"/>
</dbReference>
<dbReference type="Pfam" id="PF01479">
    <property type="entry name" value="S4"/>
    <property type="match status" value="1"/>
</dbReference>
<dbReference type="SMART" id="SM01390">
    <property type="entry name" value="Ribosomal_S4"/>
    <property type="match status" value="1"/>
</dbReference>
<dbReference type="SMART" id="SM00363">
    <property type="entry name" value="S4"/>
    <property type="match status" value="1"/>
</dbReference>
<dbReference type="SUPFAM" id="SSF55174">
    <property type="entry name" value="Alpha-L RNA-binding motif"/>
    <property type="match status" value="1"/>
</dbReference>
<dbReference type="PROSITE" id="PS00632">
    <property type="entry name" value="RIBOSOMAL_S4"/>
    <property type="match status" value="1"/>
</dbReference>
<dbReference type="PROSITE" id="PS50889">
    <property type="entry name" value="S4"/>
    <property type="match status" value="1"/>
</dbReference>
<reference key="1">
    <citation type="journal article" date="2003" name="Nucleic Acids Res.">
        <title>Complete chloroplast DNA sequence of the moss Physcomitrella patens: evidence for the loss and relocation of rpoA from the chloroplast to the nucleus.</title>
        <authorList>
            <person name="Sugiura C."/>
            <person name="Kobayashi Y."/>
            <person name="Setsuyuki A."/>
            <person name="Sugita C."/>
            <person name="Sugita M."/>
        </authorList>
    </citation>
    <scope>NUCLEOTIDE SEQUENCE [LARGE SCALE GENOMIC DNA]</scope>
    <source>
        <strain>cv. Gransden 2004</strain>
    </source>
</reference>
<evidence type="ECO:0000250" key="1"/>
<evidence type="ECO:0000305" key="2"/>
<comment type="function">
    <text evidence="1">One of the primary rRNA binding proteins, it binds directly to 16S rRNA where it nucleates assembly of the body of the 30S subunit.</text>
</comment>
<comment type="function">
    <text evidence="1">With S5 and S12 plays an important role in translational accuracy.</text>
</comment>
<comment type="subunit">
    <text evidence="1">Part of the 30S ribosomal subunit. Contacts protein S5. The interaction surface between S4 and S5 is involved in control of translational fidelity (By similarity).</text>
</comment>
<comment type="subcellular location">
    <subcellularLocation>
        <location>Plastid</location>
        <location>Chloroplast</location>
    </subcellularLocation>
</comment>
<comment type="similarity">
    <text evidence="2">Belongs to the universal ribosomal protein uS4 family.</text>
</comment>
<accession>Q6YXP3</accession>